<comment type="function">
    <text evidence="2">Confers resistance to fosfomycin and deoxycholate.</text>
</comment>
<comment type="subcellular location">
    <subcellularLocation>
        <location evidence="3">Cell inner membrane</location>
        <topology evidence="3">Multi-pass membrane protein</topology>
    </subcellularLocation>
</comment>
<comment type="similarity">
    <text evidence="3">Belongs to the major facilitator superfamily. DHA1 family. MdtG (TC 2.A.1.2.20) subfamily.</text>
</comment>
<accession>P25744</accession>
<proteinExistence type="inferred from homology"/>
<sequence>MSPCENDTPINWKRNLIVAWLGCFLTGAAFSLVMPFLPLYVEQLGVTGHSALNMWSGIVFSITFLFSAIASPFWGGLADRKGRKLMLLRSALGMGIVMVLMGLAQNIWQFLILRALLGLLGGFVPNANALIATQVPRNKSGWALGTLSTGGVSGALLGPMAGGLLADSYGLRPVFFITASVLILCFFVTLFCIREKFQPVSKKEMLHMREVVTSLKNPKLVLSLFVTTLIIQVATGSIAPILTLYVRELAGNVSNVAFISGMIASVPGVAALLSAPRLGKLGDRIGPEKILITALIFSVLLLIPMSYVQTPLQLGILRFLLGAADGALLPAVQTLLVYNSSNQIAGRIFSYNQSFRDIGNVTGPLMGAAISANYGFRAVFLVTAGVVLFNAVYSWNSLRRRRIPQVSN</sequence>
<dbReference type="EMBL" id="X59939">
    <property type="protein sequence ID" value="CAA42562.1"/>
    <property type="molecule type" value="Genomic_DNA"/>
</dbReference>
<dbReference type="EMBL" id="U00096">
    <property type="protein sequence ID" value="AAC74137.1"/>
    <property type="molecule type" value="Genomic_DNA"/>
</dbReference>
<dbReference type="EMBL" id="AP009048">
    <property type="protein sequence ID" value="BAA35851.1"/>
    <property type="molecule type" value="Genomic_DNA"/>
</dbReference>
<dbReference type="PIR" id="B42290">
    <property type="entry name" value="B42290"/>
</dbReference>
<dbReference type="RefSeq" id="NP_415571.1">
    <property type="nucleotide sequence ID" value="NC_000913.3"/>
</dbReference>
<dbReference type="RefSeq" id="WP_000074172.1">
    <property type="nucleotide sequence ID" value="NZ_STEB01000016.1"/>
</dbReference>
<dbReference type="SMR" id="P25744"/>
<dbReference type="BioGRID" id="4261506">
    <property type="interactions" value="14"/>
</dbReference>
<dbReference type="FunCoup" id="P25744">
    <property type="interactions" value="362"/>
</dbReference>
<dbReference type="STRING" id="511145.b1053"/>
<dbReference type="TCDB" id="2.A.1.2.20">
    <property type="family name" value="the major facilitator superfamily (mfs)"/>
</dbReference>
<dbReference type="PaxDb" id="511145-b1053"/>
<dbReference type="DNASU" id="945627"/>
<dbReference type="EnsemblBacteria" id="AAC74137">
    <property type="protein sequence ID" value="AAC74137"/>
    <property type="gene ID" value="b1053"/>
</dbReference>
<dbReference type="GeneID" id="75203640"/>
<dbReference type="GeneID" id="945627"/>
<dbReference type="KEGG" id="ecj:JW1040"/>
<dbReference type="KEGG" id="eco:b1053"/>
<dbReference type="KEGG" id="ecoc:C3026_06410"/>
<dbReference type="PATRIC" id="fig|1411691.4.peg.1216"/>
<dbReference type="EchoBASE" id="EB1319"/>
<dbReference type="eggNOG" id="COG2814">
    <property type="taxonomic scope" value="Bacteria"/>
</dbReference>
<dbReference type="HOGENOM" id="CLU_001265_57_3_6"/>
<dbReference type="InParanoid" id="P25744"/>
<dbReference type="OMA" id="GGHFGMR"/>
<dbReference type="OrthoDB" id="65739at2"/>
<dbReference type="PhylomeDB" id="P25744"/>
<dbReference type="BioCyc" id="EcoCyc:YCEE-MONOMER"/>
<dbReference type="BioCyc" id="MetaCyc:YCEE-MONOMER"/>
<dbReference type="PRO" id="PR:P25744"/>
<dbReference type="Proteomes" id="UP000000625">
    <property type="component" value="Chromosome"/>
</dbReference>
<dbReference type="GO" id="GO:0005886">
    <property type="term" value="C:plasma membrane"/>
    <property type="evidence" value="ECO:0000255"/>
    <property type="project" value="EcoCyc"/>
</dbReference>
<dbReference type="GO" id="GO:0022857">
    <property type="term" value="F:transmembrane transporter activity"/>
    <property type="evidence" value="ECO:0007669"/>
    <property type="project" value="UniProtKB-UniRule"/>
</dbReference>
<dbReference type="GO" id="GO:0046677">
    <property type="term" value="P:response to antibiotic"/>
    <property type="evidence" value="ECO:0007669"/>
    <property type="project" value="UniProtKB-KW"/>
</dbReference>
<dbReference type="GO" id="GO:1901562">
    <property type="term" value="P:response to paraquat"/>
    <property type="evidence" value="ECO:0000270"/>
    <property type="project" value="EcoCyc"/>
</dbReference>
<dbReference type="GO" id="GO:1990961">
    <property type="term" value="P:xenobiotic detoxification by transmembrane export across the plasma membrane"/>
    <property type="evidence" value="ECO:0000315"/>
    <property type="project" value="EcoCyc"/>
</dbReference>
<dbReference type="CDD" id="cd17391">
    <property type="entry name" value="MFS_MdtG_MDR_like"/>
    <property type="match status" value="1"/>
</dbReference>
<dbReference type="FunFam" id="1.20.1250.20:FF:000020">
    <property type="entry name" value="Multidrug resistance protein MdtG"/>
    <property type="match status" value="1"/>
</dbReference>
<dbReference type="FunFam" id="1.20.1250.20:FF:000022">
    <property type="entry name" value="Multidrug resistance protein MdtG"/>
    <property type="match status" value="1"/>
</dbReference>
<dbReference type="Gene3D" id="1.20.1250.20">
    <property type="entry name" value="MFS general substrate transporter like domains"/>
    <property type="match status" value="2"/>
</dbReference>
<dbReference type="HAMAP" id="MF_01528">
    <property type="entry name" value="MFS_MdtG"/>
    <property type="match status" value="1"/>
</dbReference>
<dbReference type="InterPro" id="IPR011701">
    <property type="entry name" value="MFS"/>
</dbReference>
<dbReference type="InterPro" id="IPR020846">
    <property type="entry name" value="MFS_dom"/>
</dbReference>
<dbReference type="InterPro" id="IPR050497">
    <property type="entry name" value="MFS_MdtG_subfamily"/>
</dbReference>
<dbReference type="InterPro" id="IPR036259">
    <property type="entry name" value="MFS_trans_sf"/>
</dbReference>
<dbReference type="InterPro" id="IPR023692">
    <property type="entry name" value="Mutidrug-R_MdtG"/>
</dbReference>
<dbReference type="InterPro" id="IPR001958">
    <property type="entry name" value="Tet-R_TetA/multi-R_MdtG-like"/>
</dbReference>
<dbReference type="NCBIfam" id="NF007372">
    <property type="entry name" value="PRK09874.1"/>
    <property type="match status" value="1"/>
</dbReference>
<dbReference type="PANTHER" id="PTHR43414">
    <property type="entry name" value="MULTIDRUG RESISTANCE PROTEIN MDTG"/>
    <property type="match status" value="1"/>
</dbReference>
<dbReference type="PANTHER" id="PTHR43414:SF6">
    <property type="entry name" value="MULTIDRUG RESISTANCE PROTEIN MDTG"/>
    <property type="match status" value="1"/>
</dbReference>
<dbReference type="Pfam" id="PF07690">
    <property type="entry name" value="MFS_1"/>
    <property type="match status" value="1"/>
</dbReference>
<dbReference type="PRINTS" id="PR01035">
    <property type="entry name" value="TCRTETA"/>
</dbReference>
<dbReference type="SUPFAM" id="SSF103473">
    <property type="entry name" value="MFS general substrate transporter"/>
    <property type="match status" value="1"/>
</dbReference>
<dbReference type="PROSITE" id="PS50850">
    <property type="entry name" value="MFS"/>
    <property type="match status" value="1"/>
</dbReference>
<evidence type="ECO:0000255" key="1"/>
<evidence type="ECO:0000269" key="2">
    <source>
    </source>
</evidence>
<evidence type="ECO:0000305" key="3"/>
<gene>
    <name type="primary">mdtG</name>
    <name type="synonym">yceE</name>
    <name type="ordered locus">b1053</name>
    <name type="ordered locus">JW1040</name>
</gene>
<reference key="1">
    <citation type="journal article" date="1992" name="J. Bacteriol.">
        <title>Multicopy suppression: an approach to understanding intracellular functioning of the protein export system.</title>
        <authorList>
            <person name="Ueguchi C."/>
            <person name="Ito K."/>
        </authorList>
    </citation>
    <scope>NUCLEOTIDE SEQUENCE [GENOMIC DNA]</scope>
    <source>
        <strain>K12</strain>
    </source>
</reference>
<reference key="2">
    <citation type="journal article" date="1996" name="DNA Res.">
        <title>A 718-kb DNA sequence of the Escherichia coli K-12 genome corresponding to the 12.7-28.0 min region on the linkage map.</title>
        <authorList>
            <person name="Oshima T."/>
            <person name="Aiba H."/>
            <person name="Baba T."/>
            <person name="Fujita K."/>
            <person name="Hayashi K."/>
            <person name="Honjo A."/>
            <person name="Ikemoto K."/>
            <person name="Inada T."/>
            <person name="Itoh T."/>
            <person name="Kajihara M."/>
            <person name="Kanai K."/>
            <person name="Kashimoto K."/>
            <person name="Kimura S."/>
            <person name="Kitagawa M."/>
            <person name="Makino K."/>
            <person name="Masuda S."/>
            <person name="Miki T."/>
            <person name="Mizobuchi K."/>
            <person name="Mori H."/>
            <person name="Motomura K."/>
            <person name="Nakamura Y."/>
            <person name="Nashimoto H."/>
            <person name="Nishio Y."/>
            <person name="Saito N."/>
            <person name="Sampei G."/>
            <person name="Seki Y."/>
            <person name="Tagami H."/>
            <person name="Takemoto K."/>
            <person name="Wada C."/>
            <person name="Yamamoto Y."/>
            <person name="Yano M."/>
            <person name="Horiuchi T."/>
        </authorList>
    </citation>
    <scope>NUCLEOTIDE SEQUENCE [LARGE SCALE GENOMIC DNA]</scope>
    <source>
        <strain>K12 / W3110 / ATCC 27325 / DSM 5911</strain>
    </source>
</reference>
<reference key="3">
    <citation type="journal article" date="1997" name="Science">
        <title>The complete genome sequence of Escherichia coli K-12.</title>
        <authorList>
            <person name="Blattner F.R."/>
            <person name="Plunkett G. III"/>
            <person name="Bloch C.A."/>
            <person name="Perna N.T."/>
            <person name="Burland V."/>
            <person name="Riley M."/>
            <person name="Collado-Vides J."/>
            <person name="Glasner J.D."/>
            <person name="Rode C.K."/>
            <person name="Mayhew G.F."/>
            <person name="Gregor J."/>
            <person name="Davis N.W."/>
            <person name="Kirkpatrick H.A."/>
            <person name="Goeden M.A."/>
            <person name="Rose D.J."/>
            <person name="Mau B."/>
            <person name="Shao Y."/>
        </authorList>
    </citation>
    <scope>NUCLEOTIDE SEQUENCE [LARGE SCALE GENOMIC DNA]</scope>
    <source>
        <strain>K12 / MG1655 / ATCC 47076</strain>
    </source>
</reference>
<reference key="4">
    <citation type="journal article" date="2006" name="Mol. Syst. Biol.">
        <title>Highly accurate genome sequences of Escherichia coli K-12 strains MG1655 and W3110.</title>
        <authorList>
            <person name="Hayashi K."/>
            <person name="Morooka N."/>
            <person name="Yamamoto Y."/>
            <person name="Fujita K."/>
            <person name="Isono K."/>
            <person name="Choi S."/>
            <person name="Ohtsubo E."/>
            <person name="Baba T."/>
            <person name="Wanner B.L."/>
            <person name="Mori H."/>
            <person name="Horiuchi T."/>
        </authorList>
    </citation>
    <scope>NUCLEOTIDE SEQUENCE [LARGE SCALE GENOMIC DNA]</scope>
    <source>
        <strain>K12 / W3110 / ATCC 27325 / DSM 5911</strain>
    </source>
</reference>
<reference key="5">
    <citation type="journal article" date="2001" name="J. Bacteriol.">
        <title>Analysis of a complete library of putative drug transporter genes in Escherichia coli.</title>
        <authorList>
            <person name="Nishino K."/>
            <person name="Yamaguchi A."/>
        </authorList>
    </citation>
    <scope>FUNCTION</scope>
</reference>
<name>MDTG_ECOLI</name>
<protein>
    <recommendedName>
        <fullName>Multidrug resistance protein MdtG</fullName>
    </recommendedName>
</protein>
<keyword id="KW-0046">Antibiotic resistance</keyword>
<keyword id="KW-0997">Cell inner membrane</keyword>
<keyword id="KW-1003">Cell membrane</keyword>
<keyword id="KW-0472">Membrane</keyword>
<keyword id="KW-1185">Reference proteome</keyword>
<keyword id="KW-0812">Transmembrane</keyword>
<keyword id="KW-1133">Transmembrane helix</keyword>
<keyword id="KW-0813">Transport</keyword>
<feature type="chain" id="PRO_0000173334" description="Multidrug resistance protein MdtG">
    <location>
        <begin position="1"/>
        <end position="408"/>
    </location>
</feature>
<feature type="transmembrane region" description="Helical" evidence="1">
    <location>
        <begin position="16"/>
        <end position="36"/>
    </location>
</feature>
<feature type="transmembrane region" description="Helical" evidence="1">
    <location>
        <begin position="58"/>
        <end position="78"/>
    </location>
</feature>
<feature type="transmembrane region" description="Helical" evidence="1">
    <location>
        <begin position="92"/>
        <end position="112"/>
    </location>
</feature>
<feature type="transmembrane region" description="Helical" evidence="1">
    <location>
        <begin position="115"/>
        <end position="135"/>
    </location>
</feature>
<feature type="transmembrane region" description="Helical" evidence="1">
    <location>
        <begin position="146"/>
        <end position="166"/>
    </location>
</feature>
<feature type="transmembrane region" description="Helical" evidence="1">
    <location>
        <begin position="173"/>
        <end position="193"/>
    </location>
</feature>
<feature type="transmembrane region" description="Helical" evidence="1">
    <location>
        <begin position="224"/>
        <end position="244"/>
    </location>
</feature>
<feature type="transmembrane region" description="Helical" evidence="1">
    <location>
        <begin position="256"/>
        <end position="276"/>
    </location>
</feature>
<feature type="transmembrane region" description="Helical" evidence="1">
    <location>
        <begin position="290"/>
        <end position="310"/>
    </location>
</feature>
<feature type="transmembrane region" description="Helical" evidence="1">
    <location>
        <begin position="319"/>
        <end position="339"/>
    </location>
</feature>
<feature type="transmembrane region" description="Helical" evidence="1">
    <location>
        <begin position="378"/>
        <end position="398"/>
    </location>
</feature>
<organism>
    <name type="scientific">Escherichia coli (strain K12)</name>
    <dbReference type="NCBI Taxonomy" id="83333"/>
    <lineage>
        <taxon>Bacteria</taxon>
        <taxon>Pseudomonadati</taxon>
        <taxon>Pseudomonadota</taxon>
        <taxon>Gammaproteobacteria</taxon>
        <taxon>Enterobacterales</taxon>
        <taxon>Enterobacteriaceae</taxon>
        <taxon>Escherichia</taxon>
    </lineage>
</organism>